<reference key="1">
    <citation type="journal article" date="2008" name="PLoS ONE">
        <title>Genome sequence of a lancefield group C Streptococcus zooepidemicus strain causing epidemic nephritis: new information about an old disease.</title>
        <authorList>
            <person name="Beres S.B."/>
            <person name="Sesso R."/>
            <person name="Pinto S.W.L."/>
            <person name="Hoe N.P."/>
            <person name="Porcella S.F."/>
            <person name="Deleo F.R."/>
            <person name="Musser J.M."/>
        </authorList>
    </citation>
    <scope>NUCLEOTIDE SEQUENCE [LARGE SCALE GENOMIC DNA]</scope>
    <source>
        <strain>MGCS10565</strain>
    </source>
</reference>
<name>Y1648_STREM</name>
<dbReference type="EMBL" id="CP001129">
    <property type="protein sequence ID" value="ACG62979.1"/>
    <property type="molecule type" value="Genomic_DNA"/>
</dbReference>
<dbReference type="RefSeq" id="WP_012516235.1">
    <property type="nucleotide sequence ID" value="NC_011134.1"/>
</dbReference>
<dbReference type="SMR" id="B4U4R2"/>
<dbReference type="KEGG" id="sez:Sez_1648"/>
<dbReference type="HOGENOM" id="CLU_180108_0_0_9"/>
<dbReference type="Proteomes" id="UP000001873">
    <property type="component" value="Chromosome"/>
</dbReference>
<dbReference type="GO" id="GO:0005886">
    <property type="term" value="C:plasma membrane"/>
    <property type="evidence" value="ECO:0007669"/>
    <property type="project" value="UniProtKB-SubCell"/>
</dbReference>
<dbReference type="HAMAP" id="MF_00363">
    <property type="entry name" value="UPF0154"/>
    <property type="match status" value="1"/>
</dbReference>
<dbReference type="InterPro" id="IPR005359">
    <property type="entry name" value="UPF0154"/>
</dbReference>
<dbReference type="Pfam" id="PF03672">
    <property type="entry name" value="UPF0154"/>
    <property type="match status" value="1"/>
</dbReference>
<proteinExistence type="inferred from homology"/>
<gene>
    <name type="ordered locus">Sez_1648</name>
</gene>
<feature type="chain" id="PRO_1000121047" description="UPF0154 protein Sez_1648">
    <location>
        <begin position="1"/>
        <end position="80"/>
    </location>
</feature>
<feature type="transmembrane region" description="Helical" evidence="1">
    <location>
        <begin position="4"/>
        <end position="24"/>
    </location>
</feature>
<comment type="subcellular location">
    <subcellularLocation>
        <location evidence="1">Cell membrane</location>
        <topology evidence="1">Single-pass membrane protein</topology>
    </subcellularLocation>
</comment>
<comment type="similarity">
    <text evidence="1">Belongs to the UPF0154 family.</text>
</comment>
<protein>
    <recommendedName>
        <fullName evidence="1">UPF0154 protein Sez_1648</fullName>
    </recommendedName>
</protein>
<accession>B4U4R2</accession>
<keyword id="KW-1003">Cell membrane</keyword>
<keyword id="KW-0472">Membrane</keyword>
<keyword id="KW-0812">Transmembrane</keyword>
<keyword id="KW-1133">Transmembrane helix</keyword>
<organism>
    <name type="scientific">Streptococcus equi subsp. zooepidemicus (strain MGCS10565)</name>
    <dbReference type="NCBI Taxonomy" id="552526"/>
    <lineage>
        <taxon>Bacteria</taxon>
        <taxon>Bacillati</taxon>
        <taxon>Bacillota</taxon>
        <taxon>Bacilli</taxon>
        <taxon>Lactobacillales</taxon>
        <taxon>Streptococcaceae</taxon>
        <taxon>Streptococcus</taxon>
    </lineage>
</organism>
<sequence>MSTAIWILLIIVALTAGLFGGIFIARKQIEKEIGEHPRLTPEAIREMMSQMGQKPSEAKIQQTYRNIVKQSKAAMTKGKK</sequence>
<evidence type="ECO:0000255" key="1">
    <source>
        <dbReference type="HAMAP-Rule" id="MF_00363"/>
    </source>
</evidence>